<sequence>MAKGQAVGINKGFITTQLEKKLQKHSAVQRKGKLGKRVALVRQVIREVTGFAPYEKRIIELIKAGSAKDSKKATKIARKRLGTHRRAKVKKALLEEAVRAQRKK</sequence>
<evidence type="ECO:0000305" key="1"/>
<feature type="chain" id="PRO_0000413520" description="Large ribosomal subunit protein eL36">
    <location>
        <begin position="1"/>
        <end position="104"/>
    </location>
</feature>
<dbReference type="EMBL" id="GG662295">
    <property type="protein sequence ID" value="EAS06416.2"/>
    <property type="status" value="ALT_INIT"/>
    <property type="molecule type" value="Genomic_DNA"/>
</dbReference>
<dbReference type="RefSeq" id="XP_001026661.2">
    <property type="nucleotide sequence ID" value="XM_001026661.3"/>
</dbReference>
<dbReference type="PDB" id="4V8P">
    <property type="method" value="X-ray"/>
    <property type="resolution" value="3.52 A"/>
    <property type="chains" value="AQ/DQ/FQ/HQ=1-104"/>
</dbReference>
<dbReference type="PDBsum" id="4V8P"/>
<dbReference type="SMR" id="Q24F59"/>
<dbReference type="FunCoup" id="Q24F59">
    <property type="interactions" value="355"/>
</dbReference>
<dbReference type="IntAct" id="Q24F59">
    <property type="interactions" value="1"/>
</dbReference>
<dbReference type="STRING" id="312017.Q24F59"/>
<dbReference type="EnsemblProtists" id="EAS06416">
    <property type="protein sequence ID" value="EAS06416"/>
    <property type="gene ID" value="TTHERM_01129660"/>
</dbReference>
<dbReference type="GeneID" id="7827978"/>
<dbReference type="KEGG" id="tet:TTHERM_01129660"/>
<dbReference type="eggNOG" id="KOG3452">
    <property type="taxonomic scope" value="Eukaryota"/>
</dbReference>
<dbReference type="HOGENOM" id="CLU_140672_0_0_1"/>
<dbReference type="InParanoid" id="Q24F59"/>
<dbReference type="OMA" id="EMQGVLI"/>
<dbReference type="OrthoDB" id="302801at2759"/>
<dbReference type="Proteomes" id="UP000009168">
    <property type="component" value="Unassembled WGS sequence"/>
</dbReference>
<dbReference type="GO" id="GO:1990904">
    <property type="term" value="C:ribonucleoprotein complex"/>
    <property type="evidence" value="ECO:0007669"/>
    <property type="project" value="UniProtKB-KW"/>
</dbReference>
<dbReference type="GO" id="GO:0005840">
    <property type="term" value="C:ribosome"/>
    <property type="evidence" value="ECO:0007669"/>
    <property type="project" value="UniProtKB-KW"/>
</dbReference>
<dbReference type="GO" id="GO:0003735">
    <property type="term" value="F:structural constituent of ribosome"/>
    <property type="evidence" value="ECO:0007669"/>
    <property type="project" value="InterPro"/>
</dbReference>
<dbReference type="GO" id="GO:0006412">
    <property type="term" value="P:translation"/>
    <property type="evidence" value="ECO:0007669"/>
    <property type="project" value="InterPro"/>
</dbReference>
<dbReference type="FunFam" id="1.10.10.1760:FF:000001">
    <property type="entry name" value="60S ribosomal protein L36"/>
    <property type="match status" value="1"/>
</dbReference>
<dbReference type="Gene3D" id="1.10.10.1760">
    <property type="entry name" value="60S ribosomal protein L36"/>
    <property type="match status" value="1"/>
</dbReference>
<dbReference type="InterPro" id="IPR000509">
    <property type="entry name" value="Ribosomal_eL36"/>
</dbReference>
<dbReference type="InterPro" id="IPR038097">
    <property type="entry name" value="Ribosomal_eL36_sf"/>
</dbReference>
<dbReference type="PANTHER" id="PTHR10114">
    <property type="entry name" value="60S RIBOSOMAL PROTEIN L36"/>
    <property type="match status" value="1"/>
</dbReference>
<dbReference type="Pfam" id="PF01158">
    <property type="entry name" value="Ribosomal_L36e"/>
    <property type="match status" value="1"/>
</dbReference>
<dbReference type="PROSITE" id="PS01190">
    <property type="entry name" value="RIBOSOMAL_L36E"/>
    <property type="match status" value="1"/>
</dbReference>
<accession>Q24F59</accession>
<proteinExistence type="evidence at protein level"/>
<keyword id="KW-0002">3D-structure</keyword>
<keyword id="KW-1185">Reference proteome</keyword>
<keyword id="KW-0687">Ribonucleoprotein</keyword>
<keyword id="KW-0689">Ribosomal protein</keyword>
<reference key="1">
    <citation type="journal article" date="2006" name="PLoS Biol.">
        <title>Macronuclear genome sequence of the ciliate Tetrahymena thermophila, a model eukaryote.</title>
        <authorList>
            <person name="Eisen J.A."/>
            <person name="Coyne R.S."/>
            <person name="Wu M."/>
            <person name="Wu D."/>
            <person name="Thiagarajan M."/>
            <person name="Wortman J.R."/>
            <person name="Badger J.H."/>
            <person name="Ren Q."/>
            <person name="Amedeo P."/>
            <person name="Jones K.M."/>
            <person name="Tallon L.J."/>
            <person name="Delcher A.L."/>
            <person name="Salzberg S.L."/>
            <person name="Silva J.C."/>
            <person name="Haas B.J."/>
            <person name="Majoros W.H."/>
            <person name="Farzad M."/>
            <person name="Carlton J.M."/>
            <person name="Smith R.K. Jr."/>
            <person name="Garg J."/>
            <person name="Pearlman R.E."/>
            <person name="Karrer K.M."/>
            <person name="Sun L."/>
            <person name="Manning G."/>
            <person name="Elde N.C."/>
            <person name="Turkewitz A.P."/>
            <person name="Asai D.J."/>
            <person name="Wilkes D.E."/>
            <person name="Wang Y."/>
            <person name="Cai H."/>
            <person name="Collins K."/>
            <person name="Stewart B.A."/>
            <person name="Lee S.R."/>
            <person name="Wilamowska K."/>
            <person name="Weinberg Z."/>
            <person name="Ruzzo W.L."/>
            <person name="Wloga D."/>
            <person name="Gaertig J."/>
            <person name="Frankel J."/>
            <person name="Tsao C.-C."/>
            <person name="Gorovsky M.A."/>
            <person name="Keeling P.J."/>
            <person name="Waller R.F."/>
            <person name="Patron N.J."/>
            <person name="Cherry J.M."/>
            <person name="Stover N.A."/>
            <person name="Krieger C.J."/>
            <person name="del Toro C."/>
            <person name="Ryder H.F."/>
            <person name="Williamson S.C."/>
            <person name="Barbeau R.A."/>
            <person name="Hamilton E.P."/>
            <person name="Orias E."/>
        </authorList>
    </citation>
    <scope>NUCLEOTIDE SEQUENCE [LARGE SCALE GENOMIC DNA]</scope>
    <source>
        <strain>SB210</strain>
    </source>
</reference>
<protein>
    <recommendedName>
        <fullName evidence="1">Large ribosomal subunit protein eL36</fullName>
    </recommendedName>
    <alternativeName>
        <fullName>60S ribosomal protein L36</fullName>
    </alternativeName>
</protein>
<name>RL36_TETTS</name>
<organism>
    <name type="scientific">Tetrahymena thermophila (strain SB210)</name>
    <dbReference type="NCBI Taxonomy" id="312017"/>
    <lineage>
        <taxon>Eukaryota</taxon>
        <taxon>Sar</taxon>
        <taxon>Alveolata</taxon>
        <taxon>Ciliophora</taxon>
        <taxon>Intramacronucleata</taxon>
        <taxon>Oligohymenophorea</taxon>
        <taxon>Hymenostomatida</taxon>
        <taxon>Tetrahymenina</taxon>
        <taxon>Tetrahymenidae</taxon>
        <taxon>Tetrahymena</taxon>
    </lineage>
</organism>
<comment type="similarity">
    <text evidence="1">Belongs to the eukaryotic ribosomal protein eL36 family.</text>
</comment>
<comment type="sequence caution" evidence="1">
    <conflict type="erroneous initiation">
        <sequence resource="EMBL-CDS" id="EAS06416"/>
    </conflict>
    <text>Extended N-terminus.</text>
</comment>
<gene>
    <name type="primary">RPL36</name>
    <name type="ORF">TTHERM_01129660</name>
</gene>